<protein>
    <recommendedName>
        <fullName evidence="1">1,4-alpha-glucan branching enzyme GlgB</fullName>
        <ecNumber evidence="1">2.4.1.18</ecNumber>
    </recommendedName>
    <alternativeName>
        <fullName evidence="1">1,4-alpha-D-glucan:1,4-alpha-D-glucan 6-glucosyl-transferase</fullName>
    </alternativeName>
    <alternativeName>
        <fullName evidence="1">Alpha-(1-&gt;4)-glucan branching enzyme</fullName>
    </alternativeName>
    <alternativeName>
        <fullName evidence="1">Glycogen branching enzyme</fullName>
        <shortName evidence="1">BE</shortName>
    </alternativeName>
</protein>
<feature type="chain" id="PRO_0000188763" description="1,4-alpha-glucan branching enzyme GlgB">
    <location>
        <begin position="1"/>
        <end position="715"/>
    </location>
</feature>
<feature type="active site" description="Nucleophile" evidence="1">
    <location>
        <position position="396"/>
    </location>
</feature>
<feature type="active site" description="Proton donor" evidence="1">
    <location>
        <position position="449"/>
    </location>
</feature>
<organism>
    <name type="scientific">Vibrio vulnificus (strain YJ016)</name>
    <dbReference type="NCBI Taxonomy" id="196600"/>
    <lineage>
        <taxon>Bacteria</taxon>
        <taxon>Pseudomonadati</taxon>
        <taxon>Pseudomonadota</taxon>
        <taxon>Gammaproteobacteria</taxon>
        <taxon>Vibrionales</taxon>
        <taxon>Vibrionaceae</taxon>
        <taxon>Vibrio</taxon>
    </lineage>
</organism>
<sequence length="715" mass="81914">MFEKLSQAACSEPFAFLGPFIDPTQGALRVWMPGATGVALVLEGQPRIALEREKESAFILKADLNLHLTHYQLAIDWNGIEQLVDDPYQYHGIYAEYDDLHTPKTMYQHMGSQFMTLERDGKSISGIRFLVYAPHATAVSLVGSFNDWDGRRHPMQRLDYGIWGLFIPGLTEGVSYKFEMKGPKGEGLPHKADPWGFYAEQYPSFASVTYDHARYQWQDAQWQTRPVTEKRKEALSFYELHAGSWKRNEQGEFLNYRELAAELVPYLVDMGYTHVELMPVSEHPFYGSWGYQPVGLFAPTSRYGSPDDFKFFVDACHQAGIGVVLDWVPAHFPSDDHGLANFDGTPLFHDPDPRRGWHQDWNSFIYDLGREQVRRFLVSNALYWFEQFHIDGIRVDAVASMLYLDYSRSHGQWIPNMDGGNENYDAIATLKWMNEEVYKYFPNAMTIAEESTAFPGVSAPTFMGGLGFGFKWNMGWMHDSLSYIKEEPVHRKYHHNTLTFPLVYAHSENYVLSLSHDEVVYGKGSIHNKMPGDEWQQTANLRAYFGYMYGQPGKKLNFMGAEIGQTAEWNHDDQLQWFLLDFPRHQGVQALTRDLNHLYRNEAALHDQDCIPAGFEWRLQDAAEQSIIAHERISEAGERILVVSNFTPVPRDEFRLGVPNKGRYQLLLNTDDSKYAGSGYEVVVDVKSEAVVSEDLAQSIVLRLPPLSTLFYKLA</sequence>
<comment type="function">
    <text evidence="1">Catalyzes the formation of the alpha-1,6-glucosidic linkages in glycogen by scission of a 1,4-alpha-linked oligosaccharide from growing alpha-1,4-glucan chains and the subsequent attachment of the oligosaccharide to the alpha-1,6 position.</text>
</comment>
<comment type="catalytic activity">
    <reaction evidence="1">
        <text>Transfers a segment of a (1-&gt;4)-alpha-D-glucan chain to a primary hydroxy group in a similar glucan chain.</text>
        <dbReference type="EC" id="2.4.1.18"/>
    </reaction>
</comment>
<comment type="pathway">
    <text evidence="1">Glycan biosynthesis; glycogen biosynthesis.</text>
</comment>
<comment type="subunit">
    <text evidence="1">Monomer.</text>
</comment>
<comment type="similarity">
    <text evidence="1">Belongs to the glycosyl hydrolase 13 family. GlgB subfamily.</text>
</comment>
<comment type="sequence caution" evidence="2">
    <conflict type="erroneous initiation">
        <sequence resource="EMBL-CDS" id="BAC96105"/>
    </conflict>
</comment>
<reference key="1">
    <citation type="journal article" date="2003" name="Genome Res.">
        <title>Comparative genome analysis of Vibrio vulnificus, a marine pathogen.</title>
        <authorList>
            <person name="Chen C.-Y."/>
            <person name="Wu K.-M."/>
            <person name="Chang Y.-C."/>
            <person name="Chang C.-H."/>
            <person name="Tsai H.-C."/>
            <person name="Liao T.-L."/>
            <person name="Liu Y.-M."/>
            <person name="Chen H.-J."/>
            <person name="Shen A.B.-T."/>
            <person name="Li J.-C."/>
            <person name="Su T.-L."/>
            <person name="Shao C.-P."/>
            <person name="Lee C.-T."/>
            <person name="Hor L.-I."/>
            <person name="Tsai S.-F."/>
        </authorList>
    </citation>
    <scope>NUCLEOTIDE SEQUENCE [LARGE SCALE GENOMIC DNA]</scope>
    <source>
        <strain>YJ016</strain>
    </source>
</reference>
<evidence type="ECO:0000255" key="1">
    <source>
        <dbReference type="HAMAP-Rule" id="MF_00685"/>
    </source>
</evidence>
<evidence type="ECO:0000305" key="2"/>
<keyword id="KW-0119">Carbohydrate metabolism</keyword>
<keyword id="KW-0320">Glycogen biosynthesis</keyword>
<keyword id="KW-0321">Glycogen metabolism</keyword>
<keyword id="KW-0328">Glycosyltransferase</keyword>
<keyword id="KW-0808">Transferase</keyword>
<dbReference type="EC" id="2.4.1.18" evidence="1"/>
<dbReference type="EMBL" id="BA000038">
    <property type="protein sequence ID" value="BAC96105.1"/>
    <property type="status" value="ALT_INIT"/>
    <property type="molecule type" value="Genomic_DNA"/>
</dbReference>
<dbReference type="SMR" id="Q7MG90"/>
<dbReference type="STRING" id="672.VV93_v1c30910"/>
<dbReference type="CAZy" id="CBM48">
    <property type="family name" value="Carbohydrate-Binding Module Family 48"/>
</dbReference>
<dbReference type="CAZy" id="GH13">
    <property type="family name" value="Glycoside Hydrolase Family 13"/>
</dbReference>
<dbReference type="KEGG" id="vvy:VVA0079"/>
<dbReference type="eggNOG" id="COG0296">
    <property type="taxonomic scope" value="Bacteria"/>
</dbReference>
<dbReference type="HOGENOM" id="CLU_004245_3_2_6"/>
<dbReference type="UniPathway" id="UPA00164"/>
<dbReference type="Proteomes" id="UP000002675">
    <property type="component" value="Chromosome II"/>
</dbReference>
<dbReference type="GO" id="GO:0005829">
    <property type="term" value="C:cytosol"/>
    <property type="evidence" value="ECO:0007669"/>
    <property type="project" value="TreeGrafter"/>
</dbReference>
<dbReference type="GO" id="GO:0003844">
    <property type="term" value="F:1,4-alpha-glucan branching enzyme activity"/>
    <property type="evidence" value="ECO:0007669"/>
    <property type="project" value="UniProtKB-UniRule"/>
</dbReference>
<dbReference type="GO" id="GO:0043169">
    <property type="term" value="F:cation binding"/>
    <property type="evidence" value="ECO:0007669"/>
    <property type="project" value="InterPro"/>
</dbReference>
<dbReference type="GO" id="GO:0004553">
    <property type="term" value="F:hydrolase activity, hydrolyzing O-glycosyl compounds"/>
    <property type="evidence" value="ECO:0007669"/>
    <property type="project" value="InterPro"/>
</dbReference>
<dbReference type="GO" id="GO:0005978">
    <property type="term" value="P:glycogen biosynthetic process"/>
    <property type="evidence" value="ECO:0007669"/>
    <property type="project" value="UniProtKB-UniRule"/>
</dbReference>
<dbReference type="CDD" id="cd11322">
    <property type="entry name" value="AmyAc_Glg_BE"/>
    <property type="match status" value="1"/>
</dbReference>
<dbReference type="CDD" id="cd02855">
    <property type="entry name" value="E_set_GBE_prok_N"/>
    <property type="match status" value="1"/>
</dbReference>
<dbReference type="FunFam" id="2.60.40.1180:FF:000002">
    <property type="entry name" value="1,4-alpha-glucan branching enzyme GlgB"/>
    <property type="match status" value="1"/>
</dbReference>
<dbReference type="FunFam" id="3.20.20.80:FF:000003">
    <property type="entry name" value="1,4-alpha-glucan branching enzyme GlgB"/>
    <property type="match status" value="1"/>
</dbReference>
<dbReference type="Gene3D" id="3.20.20.80">
    <property type="entry name" value="Glycosidases"/>
    <property type="match status" value="1"/>
</dbReference>
<dbReference type="Gene3D" id="2.60.40.1180">
    <property type="entry name" value="Golgi alpha-mannosidase II"/>
    <property type="match status" value="1"/>
</dbReference>
<dbReference type="Gene3D" id="2.60.40.10">
    <property type="entry name" value="Immunoglobulins"/>
    <property type="match status" value="2"/>
</dbReference>
<dbReference type="HAMAP" id="MF_00685">
    <property type="entry name" value="GlgB"/>
    <property type="match status" value="1"/>
</dbReference>
<dbReference type="InterPro" id="IPR006048">
    <property type="entry name" value="A-amylase/branching_C"/>
</dbReference>
<dbReference type="InterPro" id="IPR037439">
    <property type="entry name" value="Branching_enzy"/>
</dbReference>
<dbReference type="InterPro" id="IPR006407">
    <property type="entry name" value="GlgB"/>
</dbReference>
<dbReference type="InterPro" id="IPR054169">
    <property type="entry name" value="GlgB_N"/>
</dbReference>
<dbReference type="InterPro" id="IPR044143">
    <property type="entry name" value="GlgB_N_E_set_prok"/>
</dbReference>
<dbReference type="InterPro" id="IPR006047">
    <property type="entry name" value="Glyco_hydro_13_cat_dom"/>
</dbReference>
<dbReference type="InterPro" id="IPR004193">
    <property type="entry name" value="Glyco_hydro_13_N"/>
</dbReference>
<dbReference type="InterPro" id="IPR013780">
    <property type="entry name" value="Glyco_hydro_b"/>
</dbReference>
<dbReference type="InterPro" id="IPR017853">
    <property type="entry name" value="Glycoside_hydrolase_SF"/>
</dbReference>
<dbReference type="InterPro" id="IPR013783">
    <property type="entry name" value="Ig-like_fold"/>
</dbReference>
<dbReference type="InterPro" id="IPR014756">
    <property type="entry name" value="Ig_E-set"/>
</dbReference>
<dbReference type="NCBIfam" id="TIGR01515">
    <property type="entry name" value="branching_enzym"/>
    <property type="match status" value="1"/>
</dbReference>
<dbReference type="NCBIfam" id="NF003811">
    <property type="entry name" value="PRK05402.1"/>
    <property type="match status" value="1"/>
</dbReference>
<dbReference type="NCBIfam" id="NF008967">
    <property type="entry name" value="PRK12313.1"/>
    <property type="match status" value="1"/>
</dbReference>
<dbReference type="PANTHER" id="PTHR43651">
    <property type="entry name" value="1,4-ALPHA-GLUCAN-BRANCHING ENZYME"/>
    <property type="match status" value="1"/>
</dbReference>
<dbReference type="PANTHER" id="PTHR43651:SF3">
    <property type="entry name" value="1,4-ALPHA-GLUCAN-BRANCHING ENZYME"/>
    <property type="match status" value="1"/>
</dbReference>
<dbReference type="Pfam" id="PF00128">
    <property type="entry name" value="Alpha-amylase"/>
    <property type="match status" value="1"/>
</dbReference>
<dbReference type="Pfam" id="PF02806">
    <property type="entry name" value="Alpha-amylase_C"/>
    <property type="match status" value="1"/>
</dbReference>
<dbReference type="Pfam" id="PF02922">
    <property type="entry name" value="CBM_48"/>
    <property type="match status" value="1"/>
</dbReference>
<dbReference type="Pfam" id="PF22019">
    <property type="entry name" value="GlgB_N"/>
    <property type="match status" value="1"/>
</dbReference>
<dbReference type="PIRSF" id="PIRSF000463">
    <property type="entry name" value="GlgB"/>
    <property type="match status" value="1"/>
</dbReference>
<dbReference type="SMART" id="SM00642">
    <property type="entry name" value="Aamy"/>
    <property type="match status" value="1"/>
</dbReference>
<dbReference type="SUPFAM" id="SSF51445">
    <property type="entry name" value="(Trans)glycosidases"/>
    <property type="match status" value="1"/>
</dbReference>
<dbReference type="SUPFAM" id="SSF81296">
    <property type="entry name" value="E set domains"/>
    <property type="match status" value="2"/>
</dbReference>
<dbReference type="SUPFAM" id="SSF51011">
    <property type="entry name" value="Glycosyl hydrolase domain"/>
    <property type="match status" value="1"/>
</dbReference>
<accession>Q7MG90</accession>
<name>GLGB_VIBVY</name>
<gene>
    <name evidence="1" type="primary">glgB</name>
    <name type="ordered locus">VVA0079</name>
</gene>
<proteinExistence type="inferred from homology"/>